<dbReference type="EMBL" id="AE014133">
    <property type="protein sequence ID" value="AAN59618.1"/>
    <property type="molecule type" value="Genomic_DNA"/>
</dbReference>
<dbReference type="RefSeq" id="NP_722312.1">
    <property type="nucleotide sequence ID" value="NC_004350.2"/>
</dbReference>
<dbReference type="RefSeq" id="WP_002262328.1">
    <property type="nucleotide sequence ID" value="NC_004350.2"/>
</dbReference>
<dbReference type="SMR" id="Q8DS25"/>
<dbReference type="STRING" id="210007.SMU_2015"/>
<dbReference type="GeneID" id="93860217"/>
<dbReference type="KEGG" id="smu:SMU_2015"/>
<dbReference type="PATRIC" id="fig|210007.7.peg.1795"/>
<dbReference type="eggNOG" id="COG0094">
    <property type="taxonomic scope" value="Bacteria"/>
</dbReference>
<dbReference type="HOGENOM" id="CLU_061015_2_1_9"/>
<dbReference type="OrthoDB" id="9806626at2"/>
<dbReference type="PhylomeDB" id="Q8DS25"/>
<dbReference type="Proteomes" id="UP000002512">
    <property type="component" value="Chromosome"/>
</dbReference>
<dbReference type="GO" id="GO:1990904">
    <property type="term" value="C:ribonucleoprotein complex"/>
    <property type="evidence" value="ECO:0007669"/>
    <property type="project" value="UniProtKB-KW"/>
</dbReference>
<dbReference type="GO" id="GO:0005840">
    <property type="term" value="C:ribosome"/>
    <property type="evidence" value="ECO:0007669"/>
    <property type="project" value="UniProtKB-KW"/>
</dbReference>
<dbReference type="GO" id="GO:0019843">
    <property type="term" value="F:rRNA binding"/>
    <property type="evidence" value="ECO:0007669"/>
    <property type="project" value="UniProtKB-UniRule"/>
</dbReference>
<dbReference type="GO" id="GO:0003735">
    <property type="term" value="F:structural constituent of ribosome"/>
    <property type="evidence" value="ECO:0007669"/>
    <property type="project" value="InterPro"/>
</dbReference>
<dbReference type="GO" id="GO:0000049">
    <property type="term" value="F:tRNA binding"/>
    <property type="evidence" value="ECO:0007669"/>
    <property type="project" value="UniProtKB-UniRule"/>
</dbReference>
<dbReference type="GO" id="GO:0006412">
    <property type="term" value="P:translation"/>
    <property type="evidence" value="ECO:0007669"/>
    <property type="project" value="UniProtKB-UniRule"/>
</dbReference>
<dbReference type="FunFam" id="3.30.1440.10:FF:000001">
    <property type="entry name" value="50S ribosomal protein L5"/>
    <property type="match status" value="1"/>
</dbReference>
<dbReference type="Gene3D" id="3.30.1440.10">
    <property type="match status" value="1"/>
</dbReference>
<dbReference type="HAMAP" id="MF_01333_B">
    <property type="entry name" value="Ribosomal_uL5_B"/>
    <property type="match status" value="1"/>
</dbReference>
<dbReference type="InterPro" id="IPR002132">
    <property type="entry name" value="Ribosomal_uL5"/>
</dbReference>
<dbReference type="InterPro" id="IPR020930">
    <property type="entry name" value="Ribosomal_uL5_bac-type"/>
</dbReference>
<dbReference type="InterPro" id="IPR031309">
    <property type="entry name" value="Ribosomal_uL5_C"/>
</dbReference>
<dbReference type="InterPro" id="IPR020929">
    <property type="entry name" value="Ribosomal_uL5_CS"/>
</dbReference>
<dbReference type="InterPro" id="IPR022803">
    <property type="entry name" value="Ribosomal_uL5_dom_sf"/>
</dbReference>
<dbReference type="InterPro" id="IPR031310">
    <property type="entry name" value="Ribosomal_uL5_N"/>
</dbReference>
<dbReference type="NCBIfam" id="NF000585">
    <property type="entry name" value="PRK00010.1"/>
    <property type="match status" value="1"/>
</dbReference>
<dbReference type="PANTHER" id="PTHR11994">
    <property type="entry name" value="60S RIBOSOMAL PROTEIN L11-RELATED"/>
    <property type="match status" value="1"/>
</dbReference>
<dbReference type="Pfam" id="PF00281">
    <property type="entry name" value="Ribosomal_L5"/>
    <property type="match status" value="1"/>
</dbReference>
<dbReference type="Pfam" id="PF00673">
    <property type="entry name" value="Ribosomal_L5_C"/>
    <property type="match status" value="1"/>
</dbReference>
<dbReference type="PIRSF" id="PIRSF002161">
    <property type="entry name" value="Ribosomal_L5"/>
    <property type="match status" value="1"/>
</dbReference>
<dbReference type="SUPFAM" id="SSF55282">
    <property type="entry name" value="RL5-like"/>
    <property type="match status" value="1"/>
</dbReference>
<dbReference type="PROSITE" id="PS00358">
    <property type="entry name" value="RIBOSOMAL_L5"/>
    <property type="match status" value="1"/>
</dbReference>
<proteinExistence type="inferred from homology"/>
<feature type="chain" id="PRO_0000125000" description="Large ribosomal subunit protein uL5">
    <location>
        <begin position="1"/>
        <end position="180"/>
    </location>
</feature>
<evidence type="ECO:0000255" key="1">
    <source>
        <dbReference type="HAMAP-Rule" id="MF_01333"/>
    </source>
</evidence>
<evidence type="ECO:0000305" key="2"/>
<gene>
    <name evidence="1" type="primary">rplE</name>
    <name type="synonym">rl5</name>
    <name type="ordered locus">SMU_2015</name>
</gene>
<protein>
    <recommendedName>
        <fullName evidence="1">Large ribosomal subunit protein uL5</fullName>
    </recommendedName>
    <alternativeName>
        <fullName evidence="2">50S ribosomal protein L5</fullName>
    </alternativeName>
</protein>
<sequence>MANRLKEKYLNEVVPALTEKFNYTSVMAVPKVDKIVLNMGVGDAVSNAKNLEKAAAELALISGQKPLITKAKKSIAGFRLREGVAIGAKVTLRGQRMYEFLDKLVTVSLPRVRDFHGVPTKSFDGRGNYTLGVKEQLIFPEINFDNVDKVRGLDIVIVTTANTDEESRELLTGLGMPFAK</sequence>
<reference key="1">
    <citation type="journal article" date="2002" name="Proc. Natl. Acad. Sci. U.S.A.">
        <title>Genome sequence of Streptococcus mutans UA159, a cariogenic dental pathogen.</title>
        <authorList>
            <person name="Ajdic D.J."/>
            <person name="McShan W.M."/>
            <person name="McLaughlin R.E."/>
            <person name="Savic G."/>
            <person name="Chang J."/>
            <person name="Carson M.B."/>
            <person name="Primeaux C."/>
            <person name="Tian R."/>
            <person name="Kenton S."/>
            <person name="Jia H.G."/>
            <person name="Lin S.P."/>
            <person name="Qian Y."/>
            <person name="Li S."/>
            <person name="Zhu H."/>
            <person name="Najar F.Z."/>
            <person name="Lai H."/>
            <person name="White J."/>
            <person name="Roe B.A."/>
            <person name="Ferretti J.J."/>
        </authorList>
    </citation>
    <scope>NUCLEOTIDE SEQUENCE [LARGE SCALE GENOMIC DNA]</scope>
    <source>
        <strain>ATCC 700610 / UA159</strain>
    </source>
</reference>
<comment type="function">
    <text evidence="1">This is one of the proteins that bind and probably mediate the attachment of the 5S RNA into the large ribosomal subunit, where it forms part of the central protuberance. In the 70S ribosome it contacts protein S13 of the 30S subunit (bridge B1b), connecting the 2 subunits; this bridge is implicated in subunit movement. Contacts the P site tRNA; the 5S rRNA and some of its associated proteins might help stabilize positioning of ribosome-bound tRNAs.</text>
</comment>
<comment type="subunit">
    <text evidence="1">Part of the 50S ribosomal subunit; part of the 5S rRNA/L5/L18/L25 subcomplex. Contacts the 5S rRNA and the P site tRNA. Forms a bridge to the 30S subunit in the 70S ribosome.</text>
</comment>
<comment type="similarity">
    <text evidence="1">Belongs to the universal ribosomal protein uL5 family.</text>
</comment>
<name>RL5_STRMU</name>
<keyword id="KW-1185">Reference proteome</keyword>
<keyword id="KW-0687">Ribonucleoprotein</keyword>
<keyword id="KW-0689">Ribosomal protein</keyword>
<keyword id="KW-0694">RNA-binding</keyword>
<keyword id="KW-0699">rRNA-binding</keyword>
<keyword id="KW-0820">tRNA-binding</keyword>
<organism>
    <name type="scientific">Streptococcus mutans serotype c (strain ATCC 700610 / UA159)</name>
    <dbReference type="NCBI Taxonomy" id="210007"/>
    <lineage>
        <taxon>Bacteria</taxon>
        <taxon>Bacillati</taxon>
        <taxon>Bacillota</taxon>
        <taxon>Bacilli</taxon>
        <taxon>Lactobacillales</taxon>
        <taxon>Streptococcaceae</taxon>
        <taxon>Streptococcus</taxon>
    </lineage>
</organism>
<accession>Q8DS25</accession>